<proteinExistence type="inferred from homology"/>
<comment type="function">
    <text evidence="1">O-methyltransferase that catalyzes the 2 O-methylation steps in the ubiquinone biosynthetic pathway.</text>
</comment>
<comment type="catalytic activity">
    <reaction evidence="1">
        <text>a 3-demethylubiquinol + S-adenosyl-L-methionine = a ubiquinol + S-adenosyl-L-homocysteine + H(+)</text>
        <dbReference type="Rhea" id="RHEA:44380"/>
        <dbReference type="Rhea" id="RHEA-COMP:9566"/>
        <dbReference type="Rhea" id="RHEA-COMP:10914"/>
        <dbReference type="ChEBI" id="CHEBI:15378"/>
        <dbReference type="ChEBI" id="CHEBI:17976"/>
        <dbReference type="ChEBI" id="CHEBI:57856"/>
        <dbReference type="ChEBI" id="CHEBI:59789"/>
        <dbReference type="ChEBI" id="CHEBI:84422"/>
        <dbReference type="EC" id="2.1.1.64"/>
    </reaction>
</comment>
<comment type="catalytic activity">
    <reaction evidence="1">
        <text>a 3-(all-trans-polyprenyl)benzene-1,2-diol + S-adenosyl-L-methionine = a 2-methoxy-6-(all-trans-polyprenyl)phenol + S-adenosyl-L-homocysteine + H(+)</text>
        <dbReference type="Rhea" id="RHEA:31411"/>
        <dbReference type="Rhea" id="RHEA-COMP:9550"/>
        <dbReference type="Rhea" id="RHEA-COMP:9551"/>
        <dbReference type="ChEBI" id="CHEBI:15378"/>
        <dbReference type="ChEBI" id="CHEBI:57856"/>
        <dbReference type="ChEBI" id="CHEBI:59789"/>
        <dbReference type="ChEBI" id="CHEBI:62729"/>
        <dbReference type="ChEBI" id="CHEBI:62731"/>
        <dbReference type="EC" id="2.1.1.222"/>
    </reaction>
</comment>
<comment type="pathway">
    <text evidence="1">Cofactor biosynthesis; ubiquinone biosynthesis.</text>
</comment>
<comment type="similarity">
    <text evidence="1">Belongs to the methyltransferase superfamily. UbiG/COQ3 family.</text>
</comment>
<organism>
    <name type="scientific">Brucella suis (strain ATCC 23445 / NCTC 10510)</name>
    <dbReference type="NCBI Taxonomy" id="470137"/>
    <lineage>
        <taxon>Bacteria</taxon>
        <taxon>Pseudomonadati</taxon>
        <taxon>Pseudomonadota</taxon>
        <taxon>Alphaproteobacteria</taxon>
        <taxon>Hyphomicrobiales</taxon>
        <taxon>Brucellaceae</taxon>
        <taxon>Brucella/Ochrobactrum group</taxon>
        <taxon>Brucella</taxon>
    </lineage>
</organism>
<gene>
    <name evidence="1" type="primary">ubiG</name>
    <name type="ordered locus">BSUIS_A1713</name>
</gene>
<sequence>MTETARTTIDASEIEHFSRIAAQWWDPQGKFRPLHKFNPTRLAYIKEKVCAKFNRDPNAPRPLEGLRFLDIGCGGGLLCEPMARLGATVIGADASATNIEVAKIHAAQSSLDIDYRATTAEALADAGEKFDVVLNMEVVEHVSDVDLFMSATSAMVKPGGLMFVATINRTLKAYGLAIIGAEYVLRWLPRGTHQYEKLVRPEELEAAFSKADLRLIDKLGVTYNPLADSWNRSRDMDVNYMVLAERPA</sequence>
<keyword id="KW-0489">Methyltransferase</keyword>
<keyword id="KW-0949">S-adenosyl-L-methionine</keyword>
<keyword id="KW-0808">Transferase</keyword>
<keyword id="KW-0831">Ubiquinone biosynthesis</keyword>
<reference key="1">
    <citation type="submission" date="2007-12" db="EMBL/GenBank/DDBJ databases">
        <title>Brucella suis ATCC 23445 whole genome shotgun sequencing project.</title>
        <authorList>
            <person name="Setubal J.C."/>
            <person name="Bowns C."/>
            <person name="Boyle S."/>
            <person name="Crasta O.R."/>
            <person name="Czar M.J."/>
            <person name="Dharmanolla C."/>
            <person name="Gillespie J.J."/>
            <person name="Kenyon R.W."/>
            <person name="Lu J."/>
            <person name="Mane S."/>
            <person name="Mohapatra S."/>
            <person name="Nagrani S."/>
            <person name="Purkayastha A."/>
            <person name="Rajasimha H.K."/>
            <person name="Shallom J.M."/>
            <person name="Shallom S."/>
            <person name="Shukla M."/>
            <person name="Snyder E.E."/>
            <person name="Sobral B.W."/>
            <person name="Wattam A.R."/>
            <person name="Will R."/>
            <person name="Williams K."/>
            <person name="Yoo H."/>
            <person name="Bruce D."/>
            <person name="Detter C."/>
            <person name="Munk C."/>
            <person name="Brettin T.S."/>
        </authorList>
    </citation>
    <scope>NUCLEOTIDE SEQUENCE [LARGE SCALE GENOMIC DNA]</scope>
    <source>
        <strain>ATCC 23445 / NCTC 10510</strain>
    </source>
</reference>
<feature type="chain" id="PRO_1000081215" description="Ubiquinone biosynthesis O-methyltransferase">
    <location>
        <begin position="1"/>
        <end position="248"/>
    </location>
</feature>
<feature type="binding site" evidence="1">
    <location>
        <position position="41"/>
    </location>
    <ligand>
        <name>S-adenosyl-L-methionine</name>
        <dbReference type="ChEBI" id="CHEBI:59789"/>
    </ligand>
</feature>
<feature type="binding site" evidence="1">
    <location>
        <position position="72"/>
    </location>
    <ligand>
        <name>S-adenosyl-L-methionine</name>
        <dbReference type="ChEBI" id="CHEBI:59789"/>
    </ligand>
</feature>
<feature type="binding site" evidence="1">
    <location>
        <position position="93"/>
    </location>
    <ligand>
        <name>S-adenosyl-L-methionine</name>
        <dbReference type="ChEBI" id="CHEBI:59789"/>
    </ligand>
</feature>
<feature type="binding site" evidence="1">
    <location>
        <position position="136"/>
    </location>
    <ligand>
        <name>S-adenosyl-L-methionine</name>
        <dbReference type="ChEBI" id="CHEBI:59789"/>
    </ligand>
</feature>
<accession>B0CIC6</accession>
<evidence type="ECO:0000255" key="1">
    <source>
        <dbReference type="HAMAP-Rule" id="MF_00472"/>
    </source>
</evidence>
<name>UBIG_BRUSI</name>
<dbReference type="EC" id="2.1.1.222" evidence="1"/>
<dbReference type="EC" id="2.1.1.64" evidence="1"/>
<dbReference type="EMBL" id="CP000911">
    <property type="protein sequence ID" value="ABY38732.1"/>
    <property type="molecule type" value="Genomic_DNA"/>
</dbReference>
<dbReference type="RefSeq" id="WP_002964945.1">
    <property type="nucleotide sequence ID" value="NC_010169.1"/>
</dbReference>
<dbReference type="SMR" id="B0CIC6"/>
<dbReference type="GeneID" id="97534838"/>
<dbReference type="KEGG" id="bmt:BSUIS_A1713"/>
<dbReference type="HOGENOM" id="CLU_042432_0_0_5"/>
<dbReference type="UniPathway" id="UPA00232"/>
<dbReference type="Proteomes" id="UP000008545">
    <property type="component" value="Chromosome I"/>
</dbReference>
<dbReference type="GO" id="GO:0102208">
    <property type="term" value="F:2-polyprenyl-6-hydroxyphenol methylase activity"/>
    <property type="evidence" value="ECO:0007669"/>
    <property type="project" value="UniProtKB-EC"/>
</dbReference>
<dbReference type="GO" id="GO:0061542">
    <property type="term" value="F:3-demethylubiquinol 3-O-methyltransferase activity"/>
    <property type="evidence" value="ECO:0007669"/>
    <property type="project" value="UniProtKB-UniRule"/>
</dbReference>
<dbReference type="GO" id="GO:0010420">
    <property type="term" value="F:polyprenyldihydroxybenzoate methyltransferase activity"/>
    <property type="evidence" value="ECO:0007669"/>
    <property type="project" value="InterPro"/>
</dbReference>
<dbReference type="GO" id="GO:0032259">
    <property type="term" value="P:methylation"/>
    <property type="evidence" value="ECO:0007669"/>
    <property type="project" value="UniProtKB-KW"/>
</dbReference>
<dbReference type="CDD" id="cd02440">
    <property type="entry name" value="AdoMet_MTases"/>
    <property type="match status" value="1"/>
</dbReference>
<dbReference type="Gene3D" id="3.40.50.150">
    <property type="entry name" value="Vaccinia Virus protein VP39"/>
    <property type="match status" value="1"/>
</dbReference>
<dbReference type="HAMAP" id="MF_00472">
    <property type="entry name" value="UbiG"/>
    <property type="match status" value="1"/>
</dbReference>
<dbReference type="InterPro" id="IPR029063">
    <property type="entry name" value="SAM-dependent_MTases_sf"/>
</dbReference>
<dbReference type="InterPro" id="IPR010233">
    <property type="entry name" value="UbiG_MeTrfase"/>
</dbReference>
<dbReference type="NCBIfam" id="TIGR01983">
    <property type="entry name" value="UbiG"/>
    <property type="match status" value="1"/>
</dbReference>
<dbReference type="PANTHER" id="PTHR43464">
    <property type="entry name" value="METHYLTRANSFERASE"/>
    <property type="match status" value="1"/>
</dbReference>
<dbReference type="PANTHER" id="PTHR43464:SF19">
    <property type="entry name" value="UBIQUINONE BIOSYNTHESIS O-METHYLTRANSFERASE, MITOCHONDRIAL"/>
    <property type="match status" value="1"/>
</dbReference>
<dbReference type="Pfam" id="PF13489">
    <property type="entry name" value="Methyltransf_23"/>
    <property type="match status" value="1"/>
</dbReference>
<dbReference type="SUPFAM" id="SSF53335">
    <property type="entry name" value="S-adenosyl-L-methionine-dependent methyltransferases"/>
    <property type="match status" value="1"/>
</dbReference>
<protein>
    <recommendedName>
        <fullName evidence="1">Ubiquinone biosynthesis O-methyltransferase</fullName>
    </recommendedName>
    <alternativeName>
        <fullName evidence="1">2-polyprenyl-6-hydroxyphenol methylase</fullName>
        <ecNumber evidence="1">2.1.1.222</ecNumber>
    </alternativeName>
    <alternativeName>
        <fullName evidence="1">3-demethylubiquinone 3-O-methyltransferase</fullName>
        <ecNumber evidence="1">2.1.1.64</ecNumber>
    </alternativeName>
</protein>